<protein>
    <recommendedName>
        <fullName evidence="2">Ornithine carbamoyltransferase</fullName>
        <shortName evidence="2">OTCase</shortName>
        <ecNumber evidence="2">2.1.3.3</ecNumber>
    </recommendedName>
</protein>
<feature type="chain" id="PRO_0000113057" description="Ornithine carbamoyltransferase">
    <location>
        <begin position="1"/>
        <end position="334"/>
    </location>
</feature>
<feature type="binding site" evidence="2">
    <location>
        <begin position="57"/>
        <end position="60"/>
    </location>
    <ligand>
        <name>carbamoyl phosphate</name>
        <dbReference type="ChEBI" id="CHEBI:58228"/>
    </ligand>
</feature>
<feature type="binding site" evidence="2">
    <location>
        <position position="84"/>
    </location>
    <ligand>
        <name>carbamoyl phosphate</name>
        <dbReference type="ChEBI" id="CHEBI:58228"/>
    </ligand>
</feature>
<feature type="binding site" evidence="2">
    <location>
        <position position="108"/>
    </location>
    <ligand>
        <name>carbamoyl phosphate</name>
        <dbReference type="ChEBI" id="CHEBI:58228"/>
    </ligand>
</feature>
<feature type="binding site" evidence="2">
    <location>
        <begin position="135"/>
        <end position="138"/>
    </location>
    <ligand>
        <name>carbamoyl phosphate</name>
        <dbReference type="ChEBI" id="CHEBI:58228"/>
    </ligand>
</feature>
<feature type="binding site" evidence="2">
    <location>
        <position position="169"/>
    </location>
    <ligand>
        <name>L-ornithine</name>
        <dbReference type="ChEBI" id="CHEBI:46911"/>
    </ligand>
</feature>
<feature type="binding site" evidence="2">
    <location>
        <position position="233"/>
    </location>
    <ligand>
        <name>L-ornithine</name>
        <dbReference type="ChEBI" id="CHEBI:46911"/>
    </ligand>
</feature>
<feature type="binding site" evidence="2">
    <location>
        <begin position="237"/>
        <end position="238"/>
    </location>
    <ligand>
        <name>L-ornithine</name>
        <dbReference type="ChEBI" id="CHEBI:46911"/>
    </ligand>
</feature>
<feature type="binding site" evidence="2">
    <location>
        <begin position="275"/>
        <end position="276"/>
    </location>
    <ligand>
        <name>carbamoyl phosphate</name>
        <dbReference type="ChEBI" id="CHEBI:58228"/>
    </ligand>
</feature>
<feature type="binding site" evidence="2">
    <location>
        <position position="320"/>
    </location>
    <ligand>
        <name>carbamoyl phosphate</name>
        <dbReference type="ChEBI" id="CHEBI:58228"/>
    </ligand>
</feature>
<comment type="function">
    <text evidence="1">Reversibly catalyzes the transfer of the carbamoyl group from carbamoyl phosphate (CP) to the N(epsilon) atom of ornithine (ORN) to produce L-citrulline.</text>
</comment>
<comment type="catalytic activity">
    <reaction evidence="2">
        <text>carbamoyl phosphate + L-ornithine = L-citrulline + phosphate + H(+)</text>
        <dbReference type="Rhea" id="RHEA:19513"/>
        <dbReference type="ChEBI" id="CHEBI:15378"/>
        <dbReference type="ChEBI" id="CHEBI:43474"/>
        <dbReference type="ChEBI" id="CHEBI:46911"/>
        <dbReference type="ChEBI" id="CHEBI:57743"/>
        <dbReference type="ChEBI" id="CHEBI:58228"/>
        <dbReference type="EC" id="2.1.3.3"/>
    </reaction>
</comment>
<comment type="pathway">
    <text evidence="2">Amino-acid biosynthesis; L-arginine biosynthesis; L-arginine from L-ornithine and carbamoyl phosphate: step 1/3.</text>
</comment>
<comment type="subcellular location">
    <subcellularLocation>
        <location evidence="2">Cytoplasm</location>
    </subcellularLocation>
</comment>
<comment type="similarity">
    <text evidence="2">Belongs to the aspartate/ornithine carbamoyltransferase superfamily. OTCase family.</text>
</comment>
<gene>
    <name evidence="2" type="primary">argF</name>
    <name type="ordered locus">VV2919</name>
</gene>
<sequence length="334" mass="36790">MAFNLRNRNFLKLLDFSTKEIQFLIDLSADLKKAKYAGTEQKKLLGKNIALIFEKASTRTRCAFEVAAFDQGAQVTYIGPSGSQIGDKESMKDTARVLGRMYDGIQYRGFGQAIVEELGAFAGVPVWNGLTDEFHPTQILADFLTMLEHSQGKALADIQFAYLGDARNNVGNSLMVGAAKMGMDISLVGPQAYWPDEELVTACQAIAKQTGGKITLTENVAEGVQGCDFLYTDVWVSMGESPEAWDERVALMKPYQVNTNVLKQTGNPNVKFMHCLPAFHNDETTIGKQVADKFGMKGLEVTEEVFESEHSIVFDEAENRMHTIKAVMVATLGS</sequence>
<proteinExistence type="inferred from homology"/>
<dbReference type="EC" id="2.1.3.3" evidence="2"/>
<dbReference type="EMBL" id="BA000037">
    <property type="protein sequence ID" value="BAC95683.1"/>
    <property type="molecule type" value="Genomic_DNA"/>
</dbReference>
<dbReference type="RefSeq" id="WP_011151228.1">
    <property type="nucleotide sequence ID" value="NC_005139.1"/>
</dbReference>
<dbReference type="SMR" id="Q7MHF2"/>
<dbReference type="STRING" id="672.VV93_v1c26420"/>
<dbReference type="KEGG" id="vvy:VV2919"/>
<dbReference type="PATRIC" id="fig|196600.6.peg.2900"/>
<dbReference type="eggNOG" id="COG0078">
    <property type="taxonomic scope" value="Bacteria"/>
</dbReference>
<dbReference type="HOGENOM" id="CLU_043846_3_1_6"/>
<dbReference type="UniPathway" id="UPA00068">
    <property type="reaction ID" value="UER00112"/>
</dbReference>
<dbReference type="Proteomes" id="UP000002675">
    <property type="component" value="Chromosome I"/>
</dbReference>
<dbReference type="GO" id="GO:0005737">
    <property type="term" value="C:cytoplasm"/>
    <property type="evidence" value="ECO:0007669"/>
    <property type="project" value="UniProtKB-SubCell"/>
</dbReference>
<dbReference type="GO" id="GO:0016597">
    <property type="term" value="F:amino acid binding"/>
    <property type="evidence" value="ECO:0007669"/>
    <property type="project" value="InterPro"/>
</dbReference>
<dbReference type="GO" id="GO:0004585">
    <property type="term" value="F:ornithine carbamoyltransferase activity"/>
    <property type="evidence" value="ECO:0007669"/>
    <property type="project" value="UniProtKB-UniRule"/>
</dbReference>
<dbReference type="GO" id="GO:0042450">
    <property type="term" value="P:arginine biosynthetic process via ornithine"/>
    <property type="evidence" value="ECO:0007669"/>
    <property type="project" value="TreeGrafter"/>
</dbReference>
<dbReference type="GO" id="GO:0019240">
    <property type="term" value="P:citrulline biosynthetic process"/>
    <property type="evidence" value="ECO:0007669"/>
    <property type="project" value="TreeGrafter"/>
</dbReference>
<dbReference type="GO" id="GO:0006526">
    <property type="term" value="P:L-arginine biosynthetic process"/>
    <property type="evidence" value="ECO:0007669"/>
    <property type="project" value="UniProtKB-UniRule"/>
</dbReference>
<dbReference type="FunFam" id="3.40.50.1370:FF:000003">
    <property type="entry name" value="Ornithine carbamoyltransferase"/>
    <property type="match status" value="1"/>
</dbReference>
<dbReference type="FunFam" id="3.40.50.1370:FF:000004">
    <property type="entry name" value="Ornithine carbamoyltransferase"/>
    <property type="match status" value="1"/>
</dbReference>
<dbReference type="Gene3D" id="3.40.50.1370">
    <property type="entry name" value="Aspartate/ornithine carbamoyltransferase"/>
    <property type="match status" value="2"/>
</dbReference>
<dbReference type="HAMAP" id="MF_01109">
    <property type="entry name" value="OTCase"/>
    <property type="match status" value="1"/>
</dbReference>
<dbReference type="InterPro" id="IPR006132">
    <property type="entry name" value="Asp/Orn_carbamoyltranf_P-bd"/>
</dbReference>
<dbReference type="InterPro" id="IPR006130">
    <property type="entry name" value="Asp/Orn_carbamoylTrfase"/>
</dbReference>
<dbReference type="InterPro" id="IPR036901">
    <property type="entry name" value="Asp/Orn_carbamoylTrfase_sf"/>
</dbReference>
<dbReference type="InterPro" id="IPR006131">
    <property type="entry name" value="Asp_carbamoyltransf_Asp/Orn-bd"/>
</dbReference>
<dbReference type="InterPro" id="IPR002292">
    <property type="entry name" value="Orn/put_carbamltrans"/>
</dbReference>
<dbReference type="InterPro" id="IPR024904">
    <property type="entry name" value="OTCase_ArgI"/>
</dbReference>
<dbReference type="NCBIfam" id="TIGR00658">
    <property type="entry name" value="orni_carb_tr"/>
    <property type="match status" value="1"/>
</dbReference>
<dbReference type="NCBIfam" id="NF003286">
    <property type="entry name" value="PRK04284.1"/>
    <property type="match status" value="1"/>
</dbReference>
<dbReference type="PANTHER" id="PTHR45753:SF2">
    <property type="entry name" value="ORNITHINE CARBAMOYLTRANSFERASE"/>
    <property type="match status" value="1"/>
</dbReference>
<dbReference type="PANTHER" id="PTHR45753">
    <property type="entry name" value="ORNITHINE CARBAMOYLTRANSFERASE, MITOCHONDRIAL"/>
    <property type="match status" value="1"/>
</dbReference>
<dbReference type="Pfam" id="PF00185">
    <property type="entry name" value="OTCace"/>
    <property type="match status" value="1"/>
</dbReference>
<dbReference type="Pfam" id="PF02729">
    <property type="entry name" value="OTCace_N"/>
    <property type="match status" value="1"/>
</dbReference>
<dbReference type="PRINTS" id="PR00100">
    <property type="entry name" value="AOTCASE"/>
</dbReference>
<dbReference type="PRINTS" id="PR00102">
    <property type="entry name" value="OTCASE"/>
</dbReference>
<dbReference type="SUPFAM" id="SSF53671">
    <property type="entry name" value="Aspartate/ornithine carbamoyltransferase"/>
    <property type="match status" value="1"/>
</dbReference>
<dbReference type="PROSITE" id="PS00097">
    <property type="entry name" value="CARBAMOYLTRANSFERASE"/>
    <property type="match status" value="1"/>
</dbReference>
<name>OTC_VIBVY</name>
<keyword id="KW-0028">Amino-acid biosynthesis</keyword>
<keyword id="KW-0055">Arginine biosynthesis</keyword>
<keyword id="KW-0963">Cytoplasm</keyword>
<keyword id="KW-0808">Transferase</keyword>
<accession>Q7MHF2</accession>
<reference key="1">
    <citation type="journal article" date="2003" name="Genome Res.">
        <title>Comparative genome analysis of Vibrio vulnificus, a marine pathogen.</title>
        <authorList>
            <person name="Chen C.-Y."/>
            <person name="Wu K.-M."/>
            <person name="Chang Y.-C."/>
            <person name="Chang C.-H."/>
            <person name="Tsai H.-C."/>
            <person name="Liao T.-L."/>
            <person name="Liu Y.-M."/>
            <person name="Chen H.-J."/>
            <person name="Shen A.B.-T."/>
            <person name="Li J.-C."/>
            <person name="Su T.-L."/>
            <person name="Shao C.-P."/>
            <person name="Lee C.-T."/>
            <person name="Hor L.-I."/>
            <person name="Tsai S.-F."/>
        </authorList>
    </citation>
    <scope>NUCLEOTIDE SEQUENCE [LARGE SCALE GENOMIC DNA]</scope>
    <source>
        <strain>YJ016</strain>
    </source>
</reference>
<organism>
    <name type="scientific">Vibrio vulnificus (strain YJ016)</name>
    <dbReference type="NCBI Taxonomy" id="196600"/>
    <lineage>
        <taxon>Bacteria</taxon>
        <taxon>Pseudomonadati</taxon>
        <taxon>Pseudomonadota</taxon>
        <taxon>Gammaproteobacteria</taxon>
        <taxon>Vibrionales</taxon>
        <taxon>Vibrionaceae</taxon>
        <taxon>Vibrio</taxon>
    </lineage>
</organism>
<evidence type="ECO:0000250" key="1"/>
<evidence type="ECO:0000255" key="2">
    <source>
        <dbReference type="HAMAP-Rule" id="MF_01109"/>
    </source>
</evidence>